<dbReference type="EC" id="2.2.1.9" evidence="1"/>
<dbReference type="EMBL" id="CP000036">
    <property type="protein sequence ID" value="ABB66865.1"/>
    <property type="molecule type" value="Genomic_DNA"/>
</dbReference>
<dbReference type="RefSeq" id="WP_004985054.1">
    <property type="nucleotide sequence ID" value="NC_007613.1"/>
</dbReference>
<dbReference type="SMR" id="Q31YJ3"/>
<dbReference type="KEGG" id="sbo:SBO_2301"/>
<dbReference type="HOGENOM" id="CLU_006051_3_0_6"/>
<dbReference type="UniPathway" id="UPA00079"/>
<dbReference type="UniPathway" id="UPA01057">
    <property type="reaction ID" value="UER00164"/>
</dbReference>
<dbReference type="Proteomes" id="UP000007067">
    <property type="component" value="Chromosome"/>
</dbReference>
<dbReference type="GO" id="GO:0070204">
    <property type="term" value="F:2-succinyl-5-enolpyruvyl-6-hydroxy-3-cyclohexene-1-carboxylic-acid synthase activity"/>
    <property type="evidence" value="ECO:0007669"/>
    <property type="project" value="UniProtKB-UniRule"/>
</dbReference>
<dbReference type="GO" id="GO:0000287">
    <property type="term" value="F:magnesium ion binding"/>
    <property type="evidence" value="ECO:0007669"/>
    <property type="project" value="UniProtKB-UniRule"/>
</dbReference>
<dbReference type="GO" id="GO:0030145">
    <property type="term" value="F:manganese ion binding"/>
    <property type="evidence" value="ECO:0007669"/>
    <property type="project" value="UniProtKB-UniRule"/>
</dbReference>
<dbReference type="GO" id="GO:0030976">
    <property type="term" value="F:thiamine pyrophosphate binding"/>
    <property type="evidence" value="ECO:0007669"/>
    <property type="project" value="UniProtKB-UniRule"/>
</dbReference>
<dbReference type="GO" id="GO:0009234">
    <property type="term" value="P:menaquinone biosynthetic process"/>
    <property type="evidence" value="ECO:0007669"/>
    <property type="project" value="UniProtKB-UniRule"/>
</dbReference>
<dbReference type="CDD" id="cd07037">
    <property type="entry name" value="TPP_PYR_MenD"/>
    <property type="match status" value="1"/>
</dbReference>
<dbReference type="CDD" id="cd02009">
    <property type="entry name" value="TPP_SHCHC_synthase"/>
    <property type="match status" value="1"/>
</dbReference>
<dbReference type="FunFam" id="3.40.50.1220:FF:000010">
    <property type="entry name" value="2-succinyl-5-enolpyruvyl-6-hydroxy-3-cyclohexene-1-carboxylate synthase"/>
    <property type="match status" value="1"/>
</dbReference>
<dbReference type="FunFam" id="3.40.50.970:FF:000029">
    <property type="entry name" value="2-succinyl-5-enolpyruvyl-6-hydroxy-3-cyclohexene-1-carboxylate synthase"/>
    <property type="match status" value="1"/>
</dbReference>
<dbReference type="Gene3D" id="3.40.50.970">
    <property type="match status" value="2"/>
</dbReference>
<dbReference type="Gene3D" id="3.40.50.1220">
    <property type="entry name" value="TPP-binding domain"/>
    <property type="match status" value="1"/>
</dbReference>
<dbReference type="HAMAP" id="MF_01659">
    <property type="entry name" value="MenD"/>
    <property type="match status" value="1"/>
</dbReference>
<dbReference type="InterPro" id="IPR004433">
    <property type="entry name" value="MenaQ_synth_MenD"/>
</dbReference>
<dbReference type="InterPro" id="IPR032264">
    <property type="entry name" value="MenD_middle"/>
</dbReference>
<dbReference type="InterPro" id="IPR029061">
    <property type="entry name" value="THDP-binding"/>
</dbReference>
<dbReference type="InterPro" id="IPR012001">
    <property type="entry name" value="Thiamin_PyroP_enz_TPP-bd_dom"/>
</dbReference>
<dbReference type="InterPro" id="IPR011766">
    <property type="entry name" value="TPP_enzyme_TPP-bd"/>
</dbReference>
<dbReference type="NCBIfam" id="TIGR00173">
    <property type="entry name" value="menD"/>
    <property type="match status" value="1"/>
</dbReference>
<dbReference type="PANTHER" id="PTHR42916">
    <property type="entry name" value="2-SUCCINYL-5-ENOLPYRUVYL-6-HYDROXY-3-CYCLOHEXENE-1-CARBOXYLATE SYNTHASE"/>
    <property type="match status" value="1"/>
</dbReference>
<dbReference type="PANTHER" id="PTHR42916:SF1">
    <property type="entry name" value="PROTEIN PHYLLO, CHLOROPLASTIC"/>
    <property type="match status" value="1"/>
</dbReference>
<dbReference type="Pfam" id="PF02775">
    <property type="entry name" value="TPP_enzyme_C"/>
    <property type="match status" value="1"/>
</dbReference>
<dbReference type="Pfam" id="PF16582">
    <property type="entry name" value="TPP_enzyme_M_2"/>
    <property type="match status" value="1"/>
</dbReference>
<dbReference type="Pfam" id="PF02776">
    <property type="entry name" value="TPP_enzyme_N"/>
    <property type="match status" value="1"/>
</dbReference>
<dbReference type="PIRSF" id="PIRSF004983">
    <property type="entry name" value="MenD"/>
    <property type="match status" value="1"/>
</dbReference>
<dbReference type="SUPFAM" id="SSF52518">
    <property type="entry name" value="Thiamin diphosphate-binding fold (THDP-binding)"/>
    <property type="match status" value="2"/>
</dbReference>
<protein>
    <recommendedName>
        <fullName evidence="1">2-succinyl-5-enolpyruvyl-6-hydroxy-3-cyclohexene-1-carboxylate synthase</fullName>
        <shortName evidence="1">SEPHCHC synthase</shortName>
        <ecNumber evidence="1">2.2.1.9</ecNumber>
    </recommendedName>
    <alternativeName>
        <fullName evidence="1">Menaquinone biosynthesis protein MenD</fullName>
    </alternativeName>
</protein>
<name>MEND_SHIBS</name>
<accession>Q31YJ3</accession>
<evidence type="ECO:0000255" key="1">
    <source>
        <dbReference type="HAMAP-Rule" id="MF_01659"/>
    </source>
</evidence>
<organism>
    <name type="scientific">Shigella boydii serotype 4 (strain Sb227)</name>
    <dbReference type="NCBI Taxonomy" id="300268"/>
    <lineage>
        <taxon>Bacteria</taxon>
        <taxon>Pseudomonadati</taxon>
        <taxon>Pseudomonadota</taxon>
        <taxon>Gammaproteobacteria</taxon>
        <taxon>Enterobacterales</taxon>
        <taxon>Enterobacteriaceae</taxon>
        <taxon>Shigella</taxon>
    </lineage>
</organism>
<gene>
    <name evidence="1" type="primary">menD</name>
    <name type="ordered locus">SBO_2301</name>
</gene>
<comment type="function">
    <text evidence="1">Catalyzes the thiamine diphosphate-dependent decarboxylation of 2-oxoglutarate and the subsequent addition of the resulting succinic semialdehyde-thiamine pyrophosphate anion to isochorismate to yield 2-succinyl-5-enolpyruvyl-6-hydroxy-3-cyclohexene-1-carboxylate (SEPHCHC).</text>
</comment>
<comment type="catalytic activity">
    <reaction evidence="1">
        <text>isochorismate + 2-oxoglutarate + H(+) = 5-enolpyruvoyl-6-hydroxy-2-succinyl-cyclohex-3-ene-1-carboxylate + CO2</text>
        <dbReference type="Rhea" id="RHEA:25593"/>
        <dbReference type="ChEBI" id="CHEBI:15378"/>
        <dbReference type="ChEBI" id="CHEBI:16526"/>
        <dbReference type="ChEBI" id="CHEBI:16810"/>
        <dbReference type="ChEBI" id="CHEBI:29780"/>
        <dbReference type="ChEBI" id="CHEBI:58818"/>
        <dbReference type="EC" id="2.2.1.9"/>
    </reaction>
</comment>
<comment type="cofactor">
    <cofactor evidence="1">
        <name>Mg(2+)</name>
        <dbReference type="ChEBI" id="CHEBI:18420"/>
    </cofactor>
    <cofactor evidence="1">
        <name>Mn(2+)</name>
        <dbReference type="ChEBI" id="CHEBI:29035"/>
    </cofactor>
</comment>
<comment type="cofactor">
    <cofactor evidence="1">
        <name>thiamine diphosphate</name>
        <dbReference type="ChEBI" id="CHEBI:58937"/>
    </cofactor>
    <text evidence="1">Binds 1 thiamine pyrophosphate per subunit.</text>
</comment>
<comment type="pathway">
    <text evidence="1">Quinol/quinone metabolism; 1,4-dihydroxy-2-naphthoate biosynthesis; 1,4-dihydroxy-2-naphthoate from chorismate: step 2/7.</text>
</comment>
<comment type="pathway">
    <text evidence="1">Quinol/quinone metabolism; menaquinone biosynthesis.</text>
</comment>
<comment type="subunit">
    <text evidence="1">Homodimer.</text>
</comment>
<comment type="similarity">
    <text evidence="1">Belongs to the TPP enzyme family. MenD subfamily.</text>
</comment>
<sequence length="556" mass="61282">MSVSAFNRRWAAVILEALTRHGVRHICIAPGSRSTPLTLAAAENSAFIHHTHFDERGLGHLALGLAKVSKQPVAVIVTSGTAVANLYPALIEAGLTGEKLILLTADRPPELIDCGANQAIRQPGMFASHPTHSISLPRPTQDIPARWLVSTIDHALGTLHAGGVHINCPFAEPLYGEMDDTGLSWQQRLGDWWQDDKPWLREAPSLESEKQRDWFFWRQKRGVVVAGRMSAEEGKKVALWAQTLGWPLIGDVLSQTGQPLPCADLWLGNAKATSELQQAQIVVQLGSSLTGKRLLQWQASCEPEEYWIVDDIEGRLDPAHHRGRRLIANIADWLELHPAEKRQPWCVEIPRLAEQAMQAVIARRDAFGEAQLAHRISDYLPEQGQLFVGNSLVVRLIDALSQLPAGYPVYSNRGASGIDGLLSTAAGVQRASGKPTLAIVGDLSALYDLNALALLRQVSAPLVLIVVNNNGGQIFSLLPTPQSERERFYLMPQNVHFEHAAAMFELKYHRPQNWQELETAFADAWRTPTTTVIEMVVNDTDGAQTLQQLLAQVSHL</sequence>
<reference key="1">
    <citation type="journal article" date="2005" name="Nucleic Acids Res.">
        <title>Genome dynamics and diversity of Shigella species, the etiologic agents of bacillary dysentery.</title>
        <authorList>
            <person name="Yang F."/>
            <person name="Yang J."/>
            <person name="Zhang X."/>
            <person name="Chen L."/>
            <person name="Jiang Y."/>
            <person name="Yan Y."/>
            <person name="Tang X."/>
            <person name="Wang J."/>
            <person name="Xiong Z."/>
            <person name="Dong J."/>
            <person name="Xue Y."/>
            <person name="Zhu Y."/>
            <person name="Xu X."/>
            <person name="Sun L."/>
            <person name="Chen S."/>
            <person name="Nie H."/>
            <person name="Peng J."/>
            <person name="Xu J."/>
            <person name="Wang Y."/>
            <person name="Yuan Z."/>
            <person name="Wen Y."/>
            <person name="Yao Z."/>
            <person name="Shen Y."/>
            <person name="Qiang B."/>
            <person name="Hou Y."/>
            <person name="Yu J."/>
            <person name="Jin Q."/>
        </authorList>
    </citation>
    <scope>NUCLEOTIDE SEQUENCE [LARGE SCALE GENOMIC DNA]</scope>
    <source>
        <strain>Sb227</strain>
    </source>
</reference>
<keyword id="KW-0460">Magnesium</keyword>
<keyword id="KW-0464">Manganese</keyword>
<keyword id="KW-0474">Menaquinone biosynthesis</keyword>
<keyword id="KW-0479">Metal-binding</keyword>
<keyword id="KW-0786">Thiamine pyrophosphate</keyword>
<keyword id="KW-0808">Transferase</keyword>
<proteinExistence type="inferred from homology"/>
<feature type="chain" id="PRO_0000341843" description="2-succinyl-5-enolpyruvyl-6-hydroxy-3-cyclohexene-1-carboxylate synthase">
    <location>
        <begin position="1"/>
        <end position="556"/>
    </location>
</feature>